<name>RL21_ESCF3</name>
<dbReference type="EMBL" id="CU928158">
    <property type="protein sequence ID" value="CAQ90656.1"/>
    <property type="molecule type" value="Genomic_DNA"/>
</dbReference>
<dbReference type="RefSeq" id="WP_000271401.1">
    <property type="nucleotide sequence ID" value="NC_011740.1"/>
</dbReference>
<dbReference type="SMR" id="B7LR53"/>
<dbReference type="GeneID" id="93778795"/>
<dbReference type="KEGG" id="efe:EFER_3163"/>
<dbReference type="HOGENOM" id="CLU_061463_3_3_6"/>
<dbReference type="OrthoDB" id="9813334at2"/>
<dbReference type="Proteomes" id="UP000000745">
    <property type="component" value="Chromosome"/>
</dbReference>
<dbReference type="GO" id="GO:0005737">
    <property type="term" value="C:cytoplasm"/>
    <property type="evidence" value="ECO:0007669"/>
    <property type="project" value="UniProtKB-ARBA"/>
</dbReference>
<dbReference type="GO" id="GO:1990904">
    <property type="term" value="C:ribonucleoprotein complex"/>
    <property type="evidence" value="ECO:0007669"/>
    <property type="project" value="UniProtKB-KW"/>
</dbReference>
<dbReference type="GO" id="GO:0005840">
    <property type="term" value="C:ribosome"/>
    <property type="evidence" value="ECO:0007669"/>
    <property type="project" value="UniProtKB-KW"/>
</dbReference>
<dbReference type="GO" id="GO:0019843">
    <property type="term" value="F:rRNA binding"/>
    <property type="evidence" value="ECO:0007669"/>
    <property type="project" value="UniProtKB-UniRule"/>
</dbReference>
<dbReference type="GO" id="GO:0003735">
    <property type="term" value="F:structural constituent of ribosome"/>
    <property type="evidence" value="ECO:0007669"/>
    <property type="project" value="InterPro"/>
</dbReference>
<dbReference type="GO" id="GO:0006412">
    <property type="term" value="P:translation"/>
    <property type="evidence" value="ECO:0007669"/>
    <property type="project" value="UniProtKB-UniRule"/>
</dbReference>
<dbReference type="HAMAP" id="MF_01363">
    <property type="entry name" value="Ribosomal_bL21"/>
    <property type="match status" value="1"/>
</dbReference>
<dbReference type="InterPro" id="IPR028909">
    <property type="entry name" value="bL21-like"/>
</dbReference>
<dbReference type="InterPro" id="IPR036164">
    <property type="entry name" value="bL21-like_sf"/>
</dbReference>
<dbReference type="InterPro" id="IPR001787">
    <property type="entry name" value="Ribosomal_bL21"/>
</dbReference>
<dbReference type="InterPro" id="IPR018258">
    <property type="entry name" value="Ribosomal_bL21_CS"/>
</dbReference>
<dbReference type="NCBIfam" id="TIGR00061">
    <property type="entry name" value="L21"/>
    <property type="match status" value="1"/>
</dbReference>
<dbReference type="PANTHER" id="PTHR21349">
    <property type="entry name" value="50S RIBOSOMAL PROTEIN L21"/>
    <property type="match status" value="1"/>
</dbReference>
<dbReference type="PANTHER" id="PTHR21349:SF0">
    <property type="entry name" value="LARGE RIBOSOMAL SUBUNIT PROTEIN BL21M"/>
    <property type="match status" value="1"/>
</dbReference>
<dbReference type="Pfam" id="PF00829">
    <property type="entry name" value="Ribosomal_L21p"/>
    <property type="match status" value="1"/>
</dbReference>
<dbReference type="SUPFAM" id="SSF141091">
    <property type="entry name" value="L21p-like"/>
    <property type="match status" value="1"/>
</dbReference>
<dbReference type="PROSITE" id="PS01169">
    <property type="entry name" value="RIBOSOMAL_L21"/>
    <property type="match status" value="1"/>
</dbReference>
<sequence>MYAVFQSGGKQHRVSEGQTVRLEKLDIATGETVEFAEVLMIANGEEVKIGVPFVDGGVIKAEVVAHGRGEKVKIVKFRRRKHYRKQQGHRQWFTDVKITGISA</sequence>
<reference key="1">
    <citation type="journal article" date="2009" name="PLoS Genet.">
        <title>Organised genome dynamics in the Escherichia coli species results in highly diverse adaptive paths.</title>
        <authorList>
            <person name="Touchon M."/>
            <person name="Hoede C."/>
            <person name="Tenaillon O."/>
            <person name="Barbe V."/>
            <person name="Baeriswyl S."/>
            <person name="Bidet P."/>
            <person name="Bingen E."/>
            <person name="Bonacorsi S."/>
            <person name="Bouchier C."/>
            <person name="Bouvet O."/>
            <person name="Calteau A."/>
            <person name="Chiapello H."/>
            <person name="Clermont O."/>
            <person name="Cruveiller S."/>
            <person name="Danchin A."/>
            <person name="Diard M."/>
            <person name="Dossat C."/>
            <person name="Karoui M.E."/>
            <person name="Frapy E."/>
            <person name="Garry L."/>
            <person name="Ghigo J.M."/>
            <person name="Gilles A.M."/>
            <person name="Johnson J."/>
            <person name="Le Bouguenec C."/>
            <person name="Lescat M."/>
            <person name="Mangenot S."/>
            <person name="Martinez-Jehanne V."/>
            <person name="Matic I."/>
            <person name="Nassif X."/>
            <person name="Oztas S."/>
            <person name="Petit M.A."/>
            <person name="Pichon C."/>
            <person name="Rouy Z."/>
            <person name="Ruf C.S."/>
            <person name="Schneider D."/>
            <person name="Tourret J."/>
            <person name="Vacherie B."/>
            <person name="Vallenet D."/>
            <person name="Medigue C."/>
            <person name="Rocha E.P.C."/>
            <person name="Denamur E."/>
        </authorList>
    </citation>
    <scope>NUCLEOTIDE SEQUENCE [LARGE SCALE GENOMIC DNA]</scope>
    <source>
        <strain>ATCC 35469 / DSM 13698 / BCRC 15582 / CCUG 18766 / IAM 14443 / JCM 21226 / LMG 7866 / NBRC 102419 / NCTC 12128 / CDC 0568-73</strain>
    </source>
</reference>
<protein>
    <recommendedName>
        <fullName evidence="1">Large ribosomal subunit protein bL21</fullName>
    </recommendedName>
    <alternativeName>
        <fullName evidence="2">50S ribosomal protein L21</fullName>
    </alternativeName>
</protein>
<accession>B7LR53</accession>
<organism>
    <name type="scientific">Escherichia fergusonii (strain ATCC 35469 / DSM 13698 / CCUG 18766 / IAM 14443 / JCM 21226 / LMG 7866 / NBRC 102419 / NCTC 12128 / CDC 0568-73)</name>
    <dbReference type="NCBI Taxonomy" id="585054"/>
    <lineage>
        <taxon>Bacteria</taxon>
        <taxon>Pseudomonadati</taxon>
        <taxon>Pseudomonadota</taxon>
        <taxon>Gammaproteobacteria</taxon>
        <taxon>Enterobacterales</taxon>
        <taxon>Enterobacteriaceae</taxon>
        <taxon>Escherichia</taxon>
    </lineage>
</organism>
<keyword id="KW-0687">Ribonucleoprotein</keyword>
<keyword id="KW-0689">Ribosomal protein</keyword>
<keyword id="KW-0694">RNA-binding</keyword>
<keyword id="KW-0699">rRNA-binding</keyword>
<evidence type="ECO:0000255" key="1">
    <source>
        <dbReference type="HAMAP-Rule" id="MF_01363"/>
    </source>
</evidence>
<evidence type="ECO:0000305" key="2"/>
<proteinExistence type="inferred from homology"/>
<comment type="function">
    <text evidence="1">This protein binds to 23S rRNA in the presence of protein L20.</text>
</comment>
<comment type="subunit">
    <text evidence="1">Part of the 50S ribosomal subunit. Contacts protein L20.</text>
</comment>
<comment type="similarity">
    <text evidence="1">Belongs to the bacterial ribosomal protein bL21 family.</text>
</comment>
<feature type="chain" id="PRO_1000143798" description="Large ribosomal subunit protein bL21">
    <location>
        <begin position="1"/>
        <end position="103"/>
    </location>
</feature>
<gene>
    <name evidence="1" type="primary">rplU</name>
    <name type="ordered locus">EFER_3163</name>
</gene>